<protein>
    <recommendedName>
        <fullName evidence="1">Transcription antitermination protein NusB</fullName>
    </recommendedName>
    <alternativeName>
        <fullName evidence="1">Antitermination factor NusB</fullName>
    </alternativeName>
</protein>
<name>NUSB_TREDE</name>
<gene>
    <name evidence="1" type="primary">nusB</name>
    <name type="ordered locus">TDE_1657</name>
</gene>
<organism>
    <name type="scientific">Treponema denticola (strain ATCC 35405 / DSM 14222 / CIP 103919 / JCM 8153 / KCTC 15104)</name>
    <dbReference type="NCBI Taxonomy" id="243275"/>
    <lineage>
        <taxon>Bacteria</taxon>
        <taxon>Pseudomonadati</taxon>
        <taxon>Spirochaetota</taxon>
        <taxon>Spirochaetia</taxon>
        <taxon>Spirochaetales</taxon>
        <taxon>Treponemataceae</taxon>
        <taxon>Treponema</taxon>
    </lineage>
</organism>
<sequence length="136" mass="15362">MSVGRRRGRILAFQALVAWDVGGAVLDDLLNFSWQNEDSIKDPNGYLFPKMMVLGTIENITEIDKVIQENLDNWVIDRLNSVDKAILRLSVYSLIYQKDTPPPIVIDEAINLAKDFGTDDSYKFVNAVLDSIKNKS</sequence>
<keyword id="KW-1185">Reference proteome</keyword>
<keyword id="KW-0694">RNA-binding</keyword>
<keyword id="KW-0804">Transcription</keyword>
<keyword id="KW-0889">Transcription antitermination</keyword>
<keyword id="KW-0805">Transcription regulation</keyword>
<feature type="chain" id="PRO_0000265622" description="Transcription antitermination protein NusB">
    <location>
        <begin position="1"/>
        <end position="136"/>
    </location>
</feature>
<comment type="function">
    <text evidence="1">Involved in transcription antitermination. Required for transcription of ribosomal RNA (rRNA) genes. Binds specifically to the boxA antiterminator sequence of the ribosomal RNA (rrn) operons.</text>
</comment>
<comment type="similarity">
    <text evidence="1">Belongs to the NusB family.</text>
</comment>
<evidence type="ECO:0000255" key="1">
    <source>
        <dbReference type="HAMAP-Rule" id="MF_00073"/>
    </source>
</evidence>
<accession>Q73M53</accession>
<reference key="1">
    <citation type="journal article" date="2004" name="Proc. Natl. Acad. Sci. U.S.A.">
        <title>Comparison of the genome of the oral pathogen Treponema denticola with other spirochete genomes.</title>
        <authorList>
            <person name="Seshadri R."/>
            <person name="Myers G.S.A."/>
            <person name="Tettelin H."/>
            <person name="Eisen J.A."/>
            <person name="Heidelberg J.F."/>
            <person name="Dodson R.J."/>
            <person name="Davidsen T.M."/>
            <person name="DeBoy R.T."/>
            <person name="Fouts D.E."/>
            <person name="Haft D.H."/>
            <person name="Selengut J."/>
            <person name="Ren Q."/>
            <person name="Brinkac L.M."/>
            <person name="Madupu R."/>
            <person name="Kolonay J.F."/>
            <person name="Durkin S.A."/>
            <person name="Daugherty S.C."/>
            <person name="Shetty J."/>
            <person name="Shvartsbeyn A."/>
            <person name="Gebregeorgis E."/>
            <person name="Geer K."/>
            <person name="Tsegaye G."/>
            <person name="Malek J.A."/>
            <person name="Ayodeji B."/>
            <person name="Shatsman S."/>
            <person name="McLeod M.P."/>
            <person name="Smajs D."/>
            <person name="Howell J.K."/>
            <person name="Pal S."/>
            <person name="Amin A."/>
            <person name="Vashisth P."/>
            <person name="McNeill T.Z."/>
            <person name="Xiang Q."/>
            <person name="Sodergren E."/>
            <person name="Baca E."/>
            <person name="Weinstock G.M."/>
            <person name="Norris S.J."/>
            <person name="Fraser C.M."/>
            <person name="Paulsen I.T."/>
        </authorList>
    </citation>
    <scope>NUCLEOTIDE SEQUENCE [LARGE SCALE GENOMIC DNA]</scope>
    <source>
        <strain>ATCC 35405 / DSM 14222 / CIP 103919 / JCM 8153 / KCTC 15104</strain>
    </source>
</reference>
<dbReference type="EMBL" id="AE017226">
    <property type="protein sequence ID" value="AAS12173.1"/>
    <property type="molecule type" value="Genomic_DNA"/>
</dbReference>
<dbReference type="RefSeq" id="NP_972262.1">
    <property type="nucleotide sequence ID" value="NC_002967.9"/>
</dbReference>
<dbReference type="RefSeq" id="WP_002679351.1">
    <property type="nucleotide sequence ID" value="NC_002967.9"/>
</dbReference>
<dbReference type="SMR" id="Q73M53"/>
<dbReference type="STRING" id="243275.TDE_1657"/>
<dbReference type="PaxDb" id="243275-TDE_1657"/>
<dbReference type="GeneID" id="2738998"/>
<dbReference type="KEGG" id="tde:TDE_1657"/>
<dbReference type="PATRIC" id="fig|243275.7.peg.1584"/>
<dbReference type="eggNOG" id="COG0781">
    <property type="taxonomic scope" value="Bacteria"/>
</dbReference>
<dbReference type="HOGENOM" id="CLU_087843_3_0_12"/>
<dbReference type="OrthoDB" id="9811381at2"/>
<dbReference type="Proteomes" id="UP000008212">
    <property type="component" value="Chromosome"/>
</dbReference>
<dbReference type="GO" id="GO:0005829">
    <property type="term" value="C:cytosol"/>
    <property type="evidence" value="ECO:0007669"/>
    <property type="project" value="TreeGrafter"/>
</dbReference>
<dbReference type="GO" id="GO:0003723">
    <property type="term" value="F:RNA binding"/>
    <property type="evidence" value="ECO:0007669"/>
    <property type="project" value="UniProtKB-UniRule"/>
</dbReference>
<dbReference type="GO" id="GO:0006353">
    <property type="term" value="P:DNA-templated transcription termination"/>
    <property type="evidence" value="ECO:0007669"/>
    <property type="project" value="UniProtKB-UniRule"/>
</dbReference>
<dbReference type="GO" id="GO:0031564">
    <property type="term" value="P:transcription antitermination"/>
    <property type="evidence" value="ECO:0007669"/>
    <property type="project" value="UniProtKB-KW"/>
</dbReference>
<dbReference type="CDD" id="cd00619">
    <property type="entry name" value="Terminator_NusB"/>
    <property type="match status" value="1"/>
</dbReference>
<dbReference type="Gene3D" id="1.10.940.10">
    <property type="entry name" value="NusB-like"/>
    <property type="match status" value="1"/>
</dbReference>
<dbReference type="HAMAP" id="MF_00073">
    <property type="entry name" value="NusB"/>
    <property type="match status" value="1"/>
</dbReference>
<dbReference type="InterPro" id="IPR035926">
    <property type="entry name" value="NusB-like_sf"/>
</dbReference>
<dbReference type="InterPro" id="IPR011605">
    <property type="entry name" value="NusB_fam"/>
</dbReference>
<dbReference type="InterPro" id="IPR006027">
    <property type="entry name" value="NusB_RsmB_TIM44"/>
</dbReference>
<dbReference type="NCBIfam" id="TIGR01951">
    <property type="entry name" value="nusB"/>
    <property type="match status" value="1"/>
</dbReference>
<dbReference type="PANTHER" id="PTHR11078:SF3">
    <property type="entry name" value="ANTITERMINATION NUSB DOMAIN-CONTAINING PROTEIN"/>
    <property type="match status" value="1"/>
</dbReference>
<dbReference type="PANTHER" id="PTHR11078">
    <property type="entry name" value="N UTILIZATION SUBSTANCE PROTEIN B-RELATED"/>
    <property type="match status" value="1"/>
</dbReference>
<dbReference type="Pfam" id="PF01029">
    <property type="entry name" value="NusB"/>
    <property type="match status" value="1"/>
</dbReference>
<dbReference type="SUPFAM" id="SSF48013">
    <property type="entry name" value="NusB-like"/>
    <property type="match status" value="1"/>
</dbReference>
<proteinExistence type="inferred from homology"/>